<comment type="function">
    <text evidence="4">Plays an important role in the regulation of cell proliferation, cell differentiation and cell migration. Required for normal ossification and bone development. Stimulates hepatic and intestinal proliferation.</text>
</comment>
<comment type="subunit">
    <text evidence="4">Interacts with FGFR3 and FGFR4.</text>
</comment>
<comment type="subcellular location">
    <subcellularLocation>
        <location evidence="1">Secreted</location>
    </subcellularLocation>
</comment>
<comment type="similarity">
    <text evidence="6">Belongs to the heparin-binding growth factors family.</text>
</comment>
<evidence type="ECO:0000250" key="1"/>
<evidence type="ECO:0000255" key="2"/>
<evidence type="ECO:0000256" key="3">
    <source>
        <dbReference type="SAM" id="MobiDB-lite"/>
    </source>
</evidence>
<evidence type="ECO:0000269" key="4">
    <source>
    </source>
</evidence>
<evidence type="ECO:0000269" key="5">
    <source ref="9"/>
</evidence>
<evidence type="ECO:0000305" key="6"/>
<evidence type="ECO:0007829" key="7">
    <source>
        <dbReference type="PDB" id="4CJM"/>
    </source>
</evidence>
<feature type="signal peptide" evidence="2">
    <location>
        <begin position="1"/>
        <end position="27"/>
    </location>
</feature>
<feature type="chain" id="PRO_0000008990" description="Fibroblast growth factor 18">
    <location>
        <begin position="28"/>
        <end position="207"/>
    </location>
</feature>
<feature type="region of interest" description="Disordered" evidence="3">
    <location>
        <begin position="157"/>
        <end position="186"/>
    </location>
</feature>
<feature type="compositionally biased region" description="Basic and acidic residues" evidence="3">
    <location>
        <begin position="164"/>
        <end position="174"/>
    </location>
</feature>
<feature type="glycosylation site" description="N-linked (GlcNAc...) asparagine" evidence="2">
    <location>
        <position position="39"/>
    </location>
</feature>
<feature type="glycosylation site" description="N-linked (GlcNAc...) asparagine" evidence="2">
    <location>
        <position position="137"/>
    </location>
</feature>
<feature type="disulfide bond" evidence="5">
    <location>
        <begin position="109"/>
        <end position="127"/>
    </location>
</feature>
<feature type="strand" evidence="7">
    <location>
        <begin position="52"/>
        <end position="59"/>
    </location>
</feature>
<feature type="turn" evidence="7">
    <location>
        <begin position="60"/>
        <end position="62"/>
    </location>
</feature>
<feature type="strand" evidence="7">
    <location>
        <begin position="63"/>
        <end position="68"/>
    </location>
</feature>
<feature type="strand" evidence="7">
    <location>
        <begin position="73"/>
        <end position="77"/>
    </location>
</feature>
<feature type="helix" evidence="7">
    <location>
        <begin position="82"/>
        <end position="84"/>
    </location>
</feature>
<feature type="strand" evidence="7">
    <location>
        <begin position="86"/>
        <end position="90"/>
    </location>
</feature>
<feature type="strand" evidence="7">
    <location>
        <begin position="94"/>
        <end position="101"/>
    </location>
</feature>
<feature type="turn" evidence="7">
    <location>
        <begin position="102"/>
        <end position="104"/>
    </location>
</feature>
<feature type="strand" evidence="7">
    <location>
        <begin position="107"/>
        <end position="110"/>
    </location>
</feature>
<feature type="strand" evidence="7">
    <location>
        <begin position="116"/>
        <end position="120"/>
    </location>
</feature>
<feature type="helix" evidence="7">
    <location>
        <begin position="125"/>
        <end position="127"/>
    </location>
</feature>
<feature type="strand" evidence="7">
    <location>
        <begin position="129"/>
        <end position="133"/>
    </location>
</feature>
<feature type="strand" evidence="7">
    <location>
        <begin position="139"/>
        <end position="146"/>
    </location>
</feature>
<feature type="helix" evidence="7">
    <location>
        <begin position="162"/>
        <end position="164"/>
    </location>
</feature>
<feature type="helix" evidence="7">
    <location>
        <begin position="170"/>
        <end position="172"/>
    </location>
</feature>
<feature type="strand" evidence="7">
    <location>
        <begin position="174"/>
        <end position="177"/>
    </location>
</feature>
<gene>
    <name type="primary">FGF18</name>
    <name type="ORF">UNQ420/PRO856</name>
</gene>
<organism>
    <name type="scientific">Homo sapiens</name>
    <name type="common">Human</name>
    <dbReference type="NCBI Taxonomy" id="9606"/>
    <lineage>
        <taxon>Eukaryota</taxon>
        <taxon>Metazoa</taxon>
        <taxon>Chordata</taxon>
        <taxon>Craniata</taxon>
        <taxon>Vertebrata</taxon>
        <taxon>Euteleostomi</taxon>
        <taxon>Mammalia</taxon>
        <taxon>Eutheria</taxon>
        <taxon>Euarchontoglires</taxon>
        <taxon>Primates</taxon>
        <taxon>Haplorrhini</taxon>
        <taxon>Catarrhini</taxon>
        <taxon>Hominidae</taxon>
        <taxon>Homo</taxon>
    </lineage>
</organism>
<sequence>MYSAPSACTCLCLHFLLLCFQVQVLVAEENVDFRIHVENQTRARDDVSRKQLRLYQLYSRTSGKHIQVLGRRISARGEDGDKYAQLLVETDTFGSQVRIKGKETEFYLCMNRKGKLVGKPDGTSKECVFIEKVLENNYTALMSAKYSGWYVGFTKKGRPRKGPKTRENQQDVHFMKRYPKGQPELQKPFKYTTVTKRSRRIRPTHPA</sequence>
<protein>
    <recommendedName>
        <fullName>Fibroblast growth factor 18</fullName>
        <shortName>FGF-18</shortName>
    </recommendedName>
    <alternativeName>
        <fullName>zFGF5</fullName>
    </alternativeName>
</protein>
<keyword id="KW-0002">3D-structure</keyword>
<keyword id="KW-1015">Disulfide bond</keyword>
<keyword id="KW-0325">Glycoprotein</keyword>
<keyword id="KW-0339">Growth factor</keyword>
<keyword id="KW-1267">Proteomics identification</keyword>
<keyword id="KW-1185">Reference proteome</keyword>
<keyword id="KW-0964">Secreted</keyword>
<keyword id="KW-0732">Signal</keyword>
<reference key="1">
    <citation type="journal article" date="1998" name="Mol. Cell. Biol.">
        <title>FGF-18, a novel member of the fibroblast growth factor family, stimulates hepatic and intestinal proliferation.</title>
        <authorList>
            <person name="Hu M.C.-T."/>
            <person name="Qiu W.R."/>
            <person name="Wang Y.-P."/>
            <person name="Hill D."/>
            <person name="Ring B.D."/>
            <person name="Scully S."/>
            <person name="Bolon B."/>
            <person name="Derose M."/>
            <person name="Luethy R."/>
            <person name="Simonet W.S."/>
            <person name="Arakawa T."/>
            <person name="Danilenko D.M."/>
        </authorList>
    </citation>
    <scope>NUCLEOTIDE SEQUENCE [MRNA]</scope>
</reference>
<reference key="2">
    <citation type="journal article" date="1998" name="J. Biol. Chem.">
        <title>Structure and expression of the mRNA encoding a novel fibroblast growth factor, FGF-18.</title>
        <authorList>
            <person name="Ohbayashi N."/>
            <person name="Hoshikawa M."/>
            <person name="Kimura S."/>
            <person name="Yamasaki M."/>
            <person name="Fukui S."/>
            <person name="Ito N."/>
        </authorList>
    </citation>
    <scope>NUCLEOTIDE SEQUENCE [MRNA]</scope>
    <source>
        <tissue>Lung</tissue>
    </source>
</reference>
<reference key="3">
    <citation type="submission" date="1999-12" db="EMBL/GenBank/DDBJ databases">
        <title>Homo sapiens homologue of fibroblast growth factor.</title>
        <authorList>
            <person name="Deisher T."/>
            <person name="Conklin D."/>
            <person name="Raymond F."/>
            <person name="Bukowski T."/>
            <person name="Holderman S."/>
            <person name="Hansen B."/>
            <person name="Sheppard P."/>
            <person name="O'Hara P."/>
        </authorList>
    </citation>
    <scope>NUCLEOTIDE SEQUENCE [MRNA]</scope>
</reference>
<reference key="4">
    <citation type="submission" date="2004-10" db="EMBL/GenBank/DDBJ databases">
        <title>Cloning of human full-length CDSs in BD Creator(TM) system donor vector.</title>
        <authorList>
            <person name="Kalnine N."/>
            <person name="Chen X."/>
            <person name="Rolfs A."/>
            <person name="Halleck A."/>
            <person name="Hines L."/>
            <person name="Eisenstein S."/>
            <person name="Koundinya M."/>
            <person name="Raphael J."/>
            <person name="Moreira D."/>
            <person name="Kelley T."/>
            <person name="LaBaer J."/>
            <person name="Lin Y."/>
            <person name="Phelan M."/>
            <person name="Farmer A."/>
        </authorList>
    </citation>
    <scope>NUCLEOTIDE SEQUENCE [LARGE SCALE MRNA]</scope>
</reference>
<reference key="5">
    <citation type="submission" date="2005-09" db="EMBL/GenBank/DDBJ databases">
        <authorList>
            <person name="Mural R.J."/>
            <person name="Istrail S."/>
            <person name="Sutton G.G."/>
            <person name="Florea L."/>
            <person name="Halpern A.L."/>
            <person name="Mobarry C.M."/>
            <person name="Lippert R."/>
            <person name="Walenz B."/>
            <person name="Shatkay H."/>
            <person name="Dew I."/>
            <person name="Miller J.R."/>
            <person name="Flanigan M.J."/>
            <person name="Edwards N.J."/>
            <person name="Bolanos R."/>
            <person name="Fasulo D."/>
            <person name="Halldorsson B.V."/>
            <person name="Hannenhalli S."/>
            <person name="Turner R."/>
            <person name="Yooseph S."/>
            <person name="Lu F."/>
            <person name="Nusskern D.R."/>
            <person name="Shue B.C."/>
            <person name="Zheng X.H."/>
            <person name="Zhong F."/>
            <person name="Delcher A.L."/>
            <person name="Huson D.H."/>
            <person name="Kravitz S.A."/>
            <person name="Mouchard L."/>
            <person name="Reinert K."/>
            <person name="Remington K.A."/>
            <person name="Clark A.G."/>
            <person name="Waterman M.S."/>
            <person name="Eichler E.E."/>
            <person name="Adams M.D."/>
            <person name="Hunkapiller M.W."/>
            <person name="Myers E.W."/>
            <person name="Venter J.C."/>
        </authorList>
    </citation>
    <scope>NUCLEOTIDE SEQUENCE [LARGE SCALE GENOMIC DNA]</scope>
</reference>
<reference key="6">
    <citation type="journal article" date="2004" name="Genome Res.">
        <title>The status, quality, and expansion of the NIH full-length cDNA project: the Mammalian Gene Collection (MGC).</title>
        <authorList>
            <consortium name="The MGC Project Team"/>
        </authorList>
    </citation>
    <scope>NUCLEOTIDE SEQUENCE [LARGE SCALE MRNA]</scope>
    <source>
        <tissue>Ovary</tissue>
    </source>
</reference>
<reference key="7">
    <citation type="journal article" date="2003" name="Genome Res.">
        <title>The secreted protein discovery initiative (SPDI), a large-scale effort to identify novel human secreted and transmembrane proteins: a bioinformatics assessment.</title>
        <authorList>
            <person name="Clark H.F."/>
            <person name="Gurney A.L."/>
            <person name="Abaya E."/>
            <person name="Baker K."/>
            <person name="Baldwin D.T."/>
            <person name="Brush J."/>
            <person name="Chen J."/>
            <person name="Chow B."/>
            <person name="Chui C."/>
            <person name="Crowley C."/>
            <person name="Currell B."/>
            <person name="Deuel B."/>
            <person name="Dowd P."/>
            <person name="Eaton D."/>
            <person name="Foster J.S."/>
            <person name="Grimaldi C."/>
            <person name="Gu Q."/>
            <person name="Hass P.E."/>
            <person name="Heldens S."/>
            <person name="Huang A."/>
            <person name="Kim H.S."/>
            <person name="Klimowski L."/>
            <person name="Jin Y."/>
            <person name="Johnson S."/>
            <person name="Lee J."/>
            <person name="Lewis L."/>
            <person name="Liao D."/>
            <person name="Mark M.R."/>
            <person name="Robbie E."/>
            <person name="Sanchez C."/>
            <person name="Schoenfeld J."/>
            <person name="Seshagiri S."/>
            <person name="Simmons L."/>
            <person name="Singh J."/>
            <person name="Smith V."/>
            <person name="Stinson J."/>
            <person name="Vagts A."/>
            <person name="Vandlen R.L."/>
            <person name="Watanabe C."/>
            <person name="Wieand D."/>
            <person name="Woods K."/>
            <person name="Xie M.-H."/>
            <person name="Yansura D.G."/>
            <person name="Yi S."/>
            <person name="Yu G."/>
            <person name="Yuan J."/>
            <person name="Zhang M."/>
            <person name="Zhang Z."/>
            <person name="Goddard A.D."/>
            <person name="Wood W.I."/>
            <person name="Godowski P.J."/>
            <person name="Gray A.M."/>
        </authorList>
    </citation>
    <scope>NUCLEOTIDE SEQUENCE [LARGE SCALE MRNA] OF 1-156</scope>
</reference>
<reference key="8">
    <citation type="journal article" date="2006" name="J. Biol. Chem.">
        <title>Receptor specificity of the fibroblast growth factor family. The complete mammalian FGF family.</title>
        <authorList>
            <person name="Zhang X."/>
            <person name="Ibrahimi O.A."/>
            <person name="Olsen S.K."/>
            <person name="Umemori H."/>
            <person name="Mohammadi M."/>
            <person name="Ornitz D.M."/>
        </authorList>
    </citation>
    <scope>INTERACTION WITH FGFR3 AND FGFR4</scope>
    <scope>FUNCTION IN STIMULATION OF CELL PROLIFERATION</scope>
</reference>
<reference key="9">
    <citation type="submission" date="2010-03" db="UniProtKB">
        <authorList>
            <person name="Vilbois F."/>
        </authorList>
    </citation>
    <scope>IDENTIFICATION BY MASS SPECTROMETRY</scope>
    <scope>DISULFIDE BOND</scope>
</reference>
<reference key="10">
    <citation type="journal article" date="2010" name="Nat. Rev. Cancer">
        <title>Fibroblast growth factor signalling: from development to cancer.</title>
        <authorList>
            <person name="Turner N."/>
            <person name="Grose R."/>
        </authorList>
    </citation>
    <scope>REVIEW</scope>
</reference>
<name>FGF18_HUMAN</name>
<dbReference type="EMBL" id="AF075292">
    <property type="protein sequence ID" value="AAC62240.1"/>
    <property type="molecule type" value="mRNA"/>
</dbReference>
<dbReference type="EMBL" id="AB007422">
    <property type="protein sequence ID" value="BAA31986.1"/>
    <property type="molecule type" value="mRNA"/>
</dbReference>
<dbReference type="EMBL" id="AF211188">
    <property type="protein sequence ID" value="AAF22977.1"/>
    <property type="molecule type" value="mRNA"/>
</dbReference>
<dbReference type="EMBL" id="BT019570">
    <property type="protein sequence ID" value="AAV38377.1"/>
    <property type="molecule type" value="mRNA"/>
</dbReference>
<dbReference type="EMBL" id="BT019571">
    <property type="protein sequence ID" value="AAV38378.1"/>
    <property type="molecule type" value="mRNA"/>
</dbReference>
<dbReference type="EMBL" id="CH471062">
    <property type="protein sequence ID" value="EAW61441.1"/>
    <property type="molecule type" value="Genomic_DNA"/>
</dbReference>
<dbReference type="EMBL" id="CH471062">
    <property type="protein sequence ID" value="EAW61442.1"/>
    <property type="molecule type" value="Genomic_DNA"/>
</dbReference>
<dbReference type="EMBL" id="BC006245">
    <property type="protein sequence ID" value="AAH06245.1"/>
    <property type="molecule type" value="mRNA"/>
</dbReference>
<dbReference type="EMBL" id="AY358811">
    <property type="protein sequence ID" value="AAQ89954.1"/>
    <property type="molecule type" value="mRNA"/>
</dbReference>
<dbReference type="CCDS" id="CCDS4378.1"/>
<dbReference type="RefSeq" id="NP_003853.1">
    <property type="nucleotide sequence ID" value="NM_003862.3"/>
</dbReference>
<dbReference type="PDB" id="4CJM">
    <property type="method" value="X-ray"/>
    <property type="resolution" value="2.70 A"/>
    <property type="chains" value="A/B/C/D=50-190"/>
</dbReference>
<dbReference type="PDBsum" id="4CJM"/>
<dbReference type="SMR" id="O76093"/>
<dbReference type="BioGRID" id="114344">
    <property type="interactions" value="2"/>
</dbReference>
<dbReference type="FunCoup" id="O76093">
    <property type="interactions" value="968"/>
</dbReference>
<dbReference type="IntAct" id="O76093">
    <property type="interactions" value="1"/>
</dbReference>
<dbReference type="STRING" id="9606.ENSP00000274625"/>
<dbReference type="GlyCosmos" id="O76093">
    <property type="glycosylation" value="2 sites, No reported glycans"/>
</dbReference>
<dbReference type="GlyGen" id="O76093">
    <property type="glycosylation" value="2 sites"/>
</dbReference>
<dbReference type="iPTMnet" id="O76093"/>
<dbReference type="PhosphoSitePlus" id="O76093"/>
<dbReference type="BioMuta" id="FGF18"/>
<dbReference type="MassIVE" id="O76093"/>
<dbReference type="PaxDb" id="9606-ENSP00000274625"/>
<dbReference type="PeptideAtlas" id="O76093"/>
<dbReference type="Antibodypedia" id="16955">
    <property type="antibodies" value="222 antibodies from 30 providers"/>
</dbReference>
<dbReference type="DNASU" id="8817"/>
<dbReference type="Ensembl" id="ENST00000274625.6">
    <property type="protein sequence ID" value="ENSP00000274625.5"/>
    <property type="gene ID" value="ENSG00000156427.8"/>
</dbReference>
<dbReference type="GeneID" id="8817"/>
<dbReference type="KEGG" id="hsa:8817"/>
<dbReference type="MANE-Select" id="ENST00000274625.6">
    <property type="protein sequence ID" value="ENSP00000274625.5"/>
    <property type="RefSeq nucleotide sequence ID" value="NM_003862.3"/>
    <property type="RefSeq protein sequence ID" value="NP_003853.1"/>
</dbReference>
<dbReference type="UCSC" id="uc003mbk.4">
    <property type="organism name" value="human"/>
</dbReference>
<dbReference type="AGR" id="HGNC:3674"/>
<dbReference type="CTD" id="8817"/>
<dbReference type="DisGeNET" id="8817"/>
<dbReference type="GeneCards" id="FGF18"/>
<dbReference type="HGNC" id="HGNC:3674">
    <property type="gene designation" value="FGF18"/>
</dbReference>
<dbReference type="HPA" id="ENSG00000156427">
    <property type="expression patterns" value="Tissue enhanced (heart)"/>
</dbReference>
<dbReference type="MIM" id="603726">
    <property type="type" value="gene"/>
</dbReference>
<dbReference type="neXtProt" id="NX_O76093"/>
<dbReference type="OpenTargets" id="ENSG00000156427"/>
<dbReference type="PharmGKB" id="PA28113"/>
<dbReference type="VEuPathDB" id="HostDB:ENSG00000156427"/>
<dbReference type="eggNOG" id="KOG3885">
    <property type="taxonomic scope" value="Eukaryota"/>
</dbReference>
<dbReference type="GeneTree" id="ENSGT00940000159553"/>
<dbReference type="HOGENOM" id="CLU_090682_1_0_1"/>
<dbReference type="InParanoid" id="O76093"/>
<dbReference type="OMA" id="XPHSAMS"/>
<dbReference type="OrthoDB" id="5988014at2759"/>
<dbReference type="PAN-GO" id="O76093">
    <property type="GO annotations" value="12 GO annotations based on evolutionary models"/>
</dbReference>
<dbReference type="PhylomeDB" id="O76093"/>
<dbReference type="TreeFam" id="TF331233"/>
<dbReference type="PathwayCommons" id="O76093"/>
<dbReference type="Reactome" id="R-HSA-109704">
    <property type="pathway name" value="PI3K Cascade"/>
</dbReference>
<dbReference type="Reactome" id="R-HSA-1257604">
    <property type="pathway name" value="PIP3 activates AKT signaling"/>
</dbReference>
<dbReference type="Reactome" id="R-HSA-1839130">
    <property type="pathway name" value="Signaling by activated point mutants of FGFR3"/>
</dbReference>
<dbReference type="Reactome" id="R-HSA-190322">
    <property type="pathway name" value="FGFR4 ligand binding and activation"/>
</dbReference>
<dbReference type="Reactome" id="R-HSA-190371">
    <property type="pathway name" value="FGFR3b ligand binding and activation"/>
</dbReference>
<dbReference type="Reactome" id="R-HSA-190372">
    <property type="pathway name" value="FGFR3c ligand binding and activation"/>
</dbReference>
<dbReference type="Reactome" id="R-HSA-190375">
    <property type="pathway name" value="FGFR2c ligand binding and activation"/>
</dbReference>
<dbReference type="Reactome" id="R-HSA-2033519">
    <property type="pathway name" value="Activated point mutants of FGFR2"/>
</dbReference>
<dbReference type="Reactome" id="R-HSA-2219530">
    <property type="pathway name" value="Constitutive Signaling by Aberrant PI3K in Cancer"/>
</dbReference>
<dbReference type="Reactome" id="R-HSA-5654221">
    <property type="pathway name" value="Phospholipase C-mediated cascade, FGFR2"/>
</dbReference>
<dbReference type="Reactome" id="R-HSA-5654227">
    <property type="pathway name" value="Phospholipase C-mediated cascade, FGFR3"/>
</dbReference>
<dbReference type="Reactome" id="R-HSA-5654228">
    <property type="pathway name" value="Phospholipase C-mediated cascade, FGFR4"/>
</dbReference>
<dbReference type="Reactome" id="R-HSA-5654695">
    <property type="pathway name" value="PI-3K cascade:FGFR2"/>
</dbReference>
<dbReference type="Reactome" id="R-HSA-5654699">
    <property type="pathway name" value="SHC-mediated cascade:FGFR2"/>
</dbReference>
<dbReference type="Reactome" id="R-HSA-5654700">
    <property type="pathway name" value="FRS-mediated FGFR2 signaling"/>
</dbReference>
<dbReference type="Reactome" id="R-HSA-5654704">
    <property type="pathway name" value="SHC-mediated cascade:FGFR3"/>
</dbReference>
<dbReference type="Reactome" id="R-HSA-5654706">
    <property type="pathway name" value="FRS-mediated FGFR3 signaling"/>
</dbReference>
<dbReference type="Reactome" id="R-HSA-5654710">
    <property type="pathway name" value="PI-3K cascade:FGFR3"/>
</dbReference>
<dbReference type="Reactome" id="R-HSA-5654712">
    <property type="pathway name" value="FRS-mediated FGFR4 signaling"/>
</dbReference>
<dbReference type="Reactome" id="R-HSA-5654719">
    <property type="pathway name" value="SHC-mediated cascade:FGFR4"/>
</dbReference>
<dbReference type="Reactome" id="R-HSA-5654720">
    <property type="pathway name" value="PI-3K cascade:FGFR4"/>
</dbReference>
<dbReference type="Reactome" id="R-HSA-5654727">
    <property type="pathway name" value="Negative regulation of FGFR2 signaling"/>
</dbReference>
<dbReference type="Reactome" id="R-HSA-5654732">
    <property type="pathway name" value="Negative regulation of FGFR3 signaling"/>
</dbReference>
<dbReference type="Reactome" id="R-HSA-5654733">
    <property type="pathway name" value="Negative regulation of FGFR4 signaling"/>
</dbReference>
<dbReference type="Reactome" id="R-HSA-5655253">
    <property type="pathway name" value="Signaling by FGFR2 in disease"/>
</dbReference>
<dbReference type="Reactome" id="R-HSA-5655332">
    <property type="pathway name" value="Signaling by FGFR3 in disease"/>
</dbReference>
<dbReference type="Reactome" id="R-HSA-5658623">
    <property type="pathway name" value="FGFRL1 modulation of FGFR1 signaling"/>
</dbReference>
<dbReference type="Reactome" id="R-HSA-5673001">
    <property type="pathway name" value="RAF/MAP kinase cascade"/>
</dbReference>
<dbReference type="Reactome" id="R-HSA-6811558">
    <property type="pathway name" value="PI5P, PP2A and IER3 Regulate PI3K/AKT Signaling"/>
</dbReference>
<dbReference type="SignaLink" id="O76093"/>
<dbReference type="SIGNOR" id="O76093"/>
<dbReference type="BioGRID-ORCS" id="8817">
    <property type="hits" value="9 hits in 1146 CRISPR screens"/>
</dbReference>
<dbReference type="ChiTaRS" id="FGF18">
    <property type="organism name" value="human"/>
</dbReference>
<dbReference type="EvolutionaryTrace" id="O76093"/>
<dbReference type="GeneWiki" id="FGF18"/>
<dbReference type="GenomeRNAi" id="8817"/>
<dbReference type="Pharos" id="O76093">
    <property type="development level" value="Tbio"/>
</dbReference>
<dbReference type="PRO" id="PR:O76093"/>
<dbReference type="Proteomes" id="UP000005640">
    <property type="component" value="Chromosome 5"/>
</dbReference>
<dbReference type="RNAct" id="O76093">
    <property type="molecule type" value="protein"/>
</dbReference>
<dbReference type="Bgee" id="ENSG00000156427">
    <property type="expression patterns" value="Expressed in tendon of biceps brachii and 116 other cell types or tissues"/>
</dbReference>
<dbReference type="GO" id="GO:0005737">
    <property type="term" value="C:cytoplasm"/>
    <property type="evidence" value="ECO:0000318"/>
    <property type="project" value="GO_Central"/>
</dbReference>
<dbReference type="GO" id="GO:0005576">
    <property type="term" value="C:extracellular region"/>
    <property type="evidence" value="ECO:0000304"/>
    <property type="project" value="Reactome"/>
</dbReference>
<dbReference type="GO" id="GO:0005615">
    <property type="term" value="C:extracellular space"/>
    <property type="evidence" value="ECO:0000318"/>
    <property type="project" value="GO_Central"/>
</dbReference>
<dbReference type="GO" id="GO:0005730">
    <property type="term" value="C:nucleolus"/>
    <property type="evidence" value="ECO:0000314"/>
    <property type="project" value="LIFEdb"/>
</dbReference>
<dbReference type="GO" id="GO:0008083">
    <property type="term" value="F:growth factor activity"/>
    <property type="evidence" value="ECO:0000318"/>
    <property type="project" value="GO_Central"/>
</dbReference>
<dbReference type="GO" id="GO:0005105">
    <property type="term" value="F:type 1 fibroblast growth factor receptor binding"/>
    <property type="evidence" value="ECO:0000314"/>
    <property type="project" value="UniProtKB"/>
</dbReference>
<dbReference type="GO" id="GO:0005111">
    <property type="term" value="F:type 2 fibroblast growth factor receptor binding"/>
    <property type="evidence" value="ECO:0000314"/>
    <property type="project" value="UniProtKB"/>
</dbReference>
<dbReference type="GO" id="GO:0009653">
    <property type="term" value="P:anatomical structure morphogenesis"/>
    <property type="evidence" value="ECO:0000304"/>
    <property type="project" value="ProtInc"/>
</dbReference>
<dbReference type="GO" id="GO:0001525">
    <property type="term" value="P:angiogenesis"/>
    <property type="evidence" value="ECO:0007669"/>
    <property type="project" value="Ensembl"/>
</dbReference>
<dbReference type="GO" id="GO:0008283">
    <property type="term" value="P:cell population proliferation"/>
    <property type="evidence" value="ECO:0007669"/>
    <property type="project" value="Ensembl"/>
</dbReference>
<dbReference type="GO" id="GO:0007267">
    <property type="term" value="P:cell-cell signaling"/>
    <property type="evidence" value="ECO:0000304"/>
    <property type="project" value="ProtInc"/>
</dbReference>
<dbReference type="GO" id="GO:0002063">
    <property type="term" value="P:chondrocyte development"/>
    <property type="evidence" value="ECO:0007669"/>
    <property type="project" value="Ensembl"/>
</dbReference>
<dbReference type="GO" id="GO:0001958">
    <property type="term" value="P:endochondral ossification"/>
    <property type="evidence" value="ECO:0007669"/>
    <property type="project" value="Ensembl"/>
</dbReference>
<dbReference type="GO" id="GO:0070371">
    <property type="term" value="P:ERK1 and ERK2 cascade"/>
    <property type="evidence" value="ECO:0007669"/>
    <property type="project" value="Ensembl"/>
</dbReference>
<dbReference type="GO" id="GO:0008543">
    <property type="term" value="P:fibroblast growth factor receptor signaling pathway"/>
    <property type="evidence" value="ECO:0000318"/>
    <property type="project" value="GO_Central"/>
</dbReference>
<dbReference type="GO" id="GO:0001957">
    <property type="term" value="P:intramembranous ossification"/>
    <property type="evidence" value="ECO:0007669"/>
    <property type="project" value="Ensembl"/>
</dbReference>
<dbReference type="GO" id="GO:0030324">
    <property type="term" value="P:lung development"/>
    <property type="evidence" value="ECO:0007669"/>
    <property type="project" value="Ensembl"/>
</dbReference>
<dbReference type="GO" id="GO:0022008">
    <property type="term" value="P:neurogenesis"/>
    <property type="evidence" value="ECO:0000318"/>
    <property type="project" value="GO_Central"/>
</dbReference>
<dbReference type="GO" id="GO:0045766">
    <property type="term" value="P:positive regulation of angiogenesis"/>
    <property type="evidence" value="ECO:0000316"/>
    <property type="project" value="BHF-UCL"/>
</dbReference>
<dbReference type="GO" id="GO:0043536">
    <property type="term" value="P:positive regulation of blood vessel endothelial cell migration"/>
    <property type="evidence" value="ECO:0000316"/>
    <property type="project" value="BHF-UCL"/>
</dbReference>
<dbReference type="GO" id="GO:0008284">
    <property type="term" value="P:positive regulation of cell population proliferation"/>
    <property type="evidence" value="ECO:0000318"/>
    <property type="project" value="GO_Central"/>
</dbReference>
<dbReference type="GO" id="GO:0032332">
    <property type="term" value="P:positive regulation of chondrocyte differentiation"/>
    <property type="evidence" value="ECO:0007669"/>
    <property type="project" value="Ensembl"/>
</dbReference>
<dbReference type="GO" id="GO:2000546">
    <property type="term" value="P:positive regulation of endothelial cell chemotaxis to fibroblast growth factor"/>
    <property type="evidence" value="ECO:0000314"/>
    <property type="project" value="UniProtKB"/>
</dbReference>
<dbReference type="GO" id="GO:0070374">
    <property type="term" value="P:positive regulation of ERK1 and ERK2 cascade"/>
    <property type="evidence" value="ECO:0007669"/>
    <property type="project" value="Ensembl"/>
</dbReference>
<dbReference type="GO" id="GO:0043406">
    <property type="term" value="P:positive regulation of MAP kinase activity"/>
    <property type="evidence" value="ECO:0000314"/>
    <property type="project" value="UniProtKB"/>
</dbReference>
<dbReference type="GO" id="GO:0043410">
    <property type="term" value="P:positive regulation of MAPK cascade"/>
    <property type="evidence" value="ECO:0000318"/>
    <property type="project" value="GO_Central"/>
</dbReference>
<dbReference type="GO" id="GO:0030949">
    <property type="term" value="P:positive regulation of vascular endothelial growth factor receptor signaling pathway"/>
    <property type="evidence" value="ECO:0007669"/>
    <property type="project" value="Ensembl"/>
</dbReference>
<dbReference type="GO" id="GO:0030334">
    <property type="term" value="P:regulation of cell migration"/>
    <property type="evidence" value="ECO:0000318"/>
    <property type="project" value="GO_Central"/>
</dbReference>
<dbReference type="GO" id="GO:0007165">
    <property type="term" value="P:signal transduction"/>
    <property type="evidence" value="ECO:0000304"/>
    <property type="project" value="ProtInc"/>
</dbReference>
<dbReference type="GO" id="GO:0048010">
    <property type="term" value="P:vascular endothelial growth factor receptor signaling pathway"/>
    <property type="evidence" value="ECO:0007669"/>
    <property type="project" value="Ensembl"/>
</dbReference>
<dbReference type="CDD" id="cd23324">
    <property type="entry name" value="beta-trefoil_FGF18"/>
    <property type="match status" value="1"/>
</dbReference>
<dbReference type="FunFam" id="2.80.10.50:FF:000007">
    <property type="entry name" value="Fibroblast growth factor"/>
    <property type="match status" value="1"/>
</dbReference>
<dbReference type="Gene3D" id="2.80.10.50">
    <property type="match status" value="1"/>
</dbReference>
<dbReference type="InterPro" id="IPR002209">
    <property type="entry name" value="Fibroblast_GF_fam"/>
</dbReference>
<dbReference type="InterPro" id="IPR008996">
    <property type="entry name" value="IL1/FGF"/>
</dbReference>
<dbReference type="PANTHER" id="PTHR11486">
    <property type="entry name" value="FIBROBLAST GROWTH FACTOR"/>
    <property type="match status" value="1"/>
</dbReference>
<dbReference type="Pfam" id="PF00167">
    <property type="entry name" value="FGF"/>
    <property type="match status" value="1"/>
</dbReference>
<dbReference type="PRINTS" id="PR00262">
    <property type="entry name" value="IL1HBGF"/>
</dbReference>
<dbReference type="SMART" id="SM00442">
    <property type="entry name" value="FGF"/>
    <property type="match status" value="1"/>
</dbReference>
<dbReference type="SUPFAM" id="SSF50353">
    <property type="entry name" value="Cytokine"/>
    <property type="match status" value="1"/>
</dbReference>
<dbReference type="PROSITE" id="PS00247">
    <property type="entry name" value="HBGF_FGF"/>
    <property type="match status" value="1"/>
</dbReference>
<accession>O76093</accession>
<accession>D3DQL7</accession>
<accession>Q6UWF1</accession>
<proteinExistence type="evidence at protein level"/>